<accession>A1JRU5</accession>
<protein>
    <recommendedName>
        <fullName evidence="1">Chorismate pyruvate-lyase</fullName>
        <shortName evidence="1">CL</shortName>
        <shortName evidence="1">CPL</shortName>
        <ecNumber evidence="1">4.1.3.40</ecNumber>
    </recommendedName>
</protein>
<keyword id="KW-0963">Cytoplasm</keyword>
<keyword id="KW-0456">Lyase</keyword>
<keyword id="KW-0670">Pyruvate</keyword>
<keyword id="KW-0831">Ubiquinone biosynthesis</keyword>
<feature type="chain" id="PRO_0000292085" description="Chorismate pyruvate-lyase">
    <location>
        <begin position="1"/>
        <end position="168"/>
    </location>
</feature>
<feature type="binding site" evidence="1">
    <location>
        <position position="36"/>
    </location>
    <ligand>
        <name>substrate</name>
    </ligand>
</feature>
<feature type="binding site" evidence="1">
    <location>
        <position position="78"/>
    </location>
    <ligand>
        <name>substrate</name>
    </ligand>
</feature>
<feature type="binding site" evidence="1">
    <location>
        <position position="116"/>
    </location>
    <ligand>
        <name>substrate</name>
    </ligand>
</feature>
<feature type="binding site" evidence="1">
    <location>
        <position position="157"/>
    </location>
    <ligand>
        <name>substrate</name>
    </ligand>
</feature>
<comment type="function">
    <text evidence="1">Removes the pyruvyl group from chorismate, with concomitant aromatization of the ring, to provide 4-hydroxybenzoate (4HB) for the ubiquinone pathway.</text>
</comment>
<comment type="catalytic activity">
    <reaction evidence="1">
        <text>chorismate = 4-hydroxybenzoate + pyruvate</text>
        <dbReference type="Rhea" id="RHEA:16505"/>
        <dbReference type="ChEBI" id="CHEBI:15361"/>
        <dbReference type="ChEBI" id="CHEBI:17879"/>
        <dbReference type="ChEBI" id="CHEBI:29748"/>
        <dbReference type="EC" id="4.1.3.40"/>
    </reaction>
</comment>
<comment type="pathway">
    <text evidence="1">Cofactor biosynthesis; ubiquinone biosynthesis.</text>
</comment>
<comment type="subunit">
    <text evidence="1">Monomer.</text>
</comment>
<comment type="subcellular location">
    <subcellularLocation>
        <location evidence="1">Cytoplasm</location>
    </subcellularLocation>
</comment>
<comment type="similarity">
    <text evidence="1">Belongs to the UbiC family.</text>
</comment>
<gene>
    <name evidence="1" type="primary">ubiC</name>
    <name type="ordered locus">YE3859</name>
</gene>
<reference key="1">
    <citation type="journal article" date="2006" name="PLoS Genet.">
        <title>The complete genome sequence and comparative genome analysis of the high pathogenicity Yersinia enterocolitica strain 8081.</title>
        <authorList>
            <person name="Thomson N.R."/>
            <person name="Howard S."/>
            <person name="Wren B.W."/>
            <person name="Holden M.T.G."/>
            <person name="Crossman L."/>
            <person name="Challis G.L."/>
            <person name="Churcher C."/>
            <person name="Mungall K."/>
            <person name="Brooks K."/>
            <person name="Chillingworth T."/>
            <person name="Feltwell T."/>
            <person name="Abdellah Z."/>
            <person name="Hauser H."/>
            <person name="Jagels K."/>
            <person name="Maddison M."/>
            <person name="Moule S."/>
            <person name="Sanders M."/>
            <person name="Whitehead S."/>
            <person name="Quail M.A."/>
            <person name="Dougan G."/>
            <person name="Parkhill J."/>
            <person name="Prentice M.B."/>
        </authorList>
    </citation>
    <scope>NUCLEOTIDE SEQUENCE [LARGE SCALE GENOMIC DNA]</scope>
    <source>
        <strain>NCTC 13174 / 8081</strain>
    </source>
</reference>
<sequence length="168" mass="19066">MSTSDASIIKPIQWCAIEPPNLPAAIADWLMELGSMTRRFELHCQQVHVEPQRECFISRDELGEEAEHLPISERYWLREIVLCGDNQPWLLGRTVIPEGTLSGPDRALVDLGTLPLGRYLFGGNNLTRDYIQVGRQDELWARRSLLRLSGKPLLLTEVFLPASPLYSI</sequence>
<evidence type="ECO:0000255" key="1">
    <source>
        <dbReference type="HAMAP-Rule" id="MF_01632"/>
    </source>
</evidence>
<dbReference type="EC" id="4.1.3.40" evidence="1"/>
<dbReference type="EMBL" id="AM286415">
    <property type="protein sequence ID" value="CAL13881.1"/>
    <property type="molecule type" value="Genomic_DNA"/>
</dbReference>
<dbReference type="RefSeq" id="WP_011817301.1">
    <property type="nucleotide sequence ID" value="NC_008800.1"/>
</dbReference>
<dbReference type="RefSeq" id="YP_001008007.1">
    <property type="nucleotide sequence ID" value="NC_008800.1"/>
</dbReference>
<dbReference type="SMR" id="A1JRU5"/>
<dbReference type="KEGG" id="yen:YE3859"/>
<dbReference type="PATRIC" id="fig|393305.7.peg.4110"/>
<dbReference type="eggNOG" id="COG3161">
    <property type="taxonomic scope" value="Bacteria"/>
</dbReference>
<dbReference type="HOGENOM" id="CLU_096824_1_0_6"/>
<dbReference type="OrthoDB" id="9789493at2"/>
<dbReference type="UniPathway" id="UPA00232"/>
<dbReference type="Proteomes" id="UP000000642">
    <property type="component" value="Chromosome"/>
</dbReference>
<dbReference type="GO" id="GO:0005829">
    <property type="term" value="C:cytosol"/>
    <property type="evidence" value="ECO:0007669"/>
    <property type="project" value="TreeGrafter"/>
</dbReference>
<dbReference type="GO" id="GO:0008813">
    <property type="term" value="F:chorismate lyase activity"/>
    <property type="evidence" value="ECO:0007669"/>
    <property type="project" value="UniProtKB-UniRule"/>
</dbReference>
<dbReference type="GO" id="GO:0042866">
    <property type="term" value="P:pyruvate biosynthetic process"/>
    <property type="evidence" value="ECO:0007669"/>
    <property type="project" value="UniProtKB-UniRule"/>
</dbReference>
<dbReference type="GO" id="GO:0006744">
    <property type="term" value="P:ubiquinone biosynthetic process"/>
    <property type="evidence" value="ECO:0007669"/>
    <property type="project" value="UniProtKB-UniRule"/>
</dbReference>
<dbReference type="Gene3D" id="3.40.1410.10">
    <property type="entry name" value="Chorismate lyase-like"/>
    <property type="match status" value="1"/>
</dbReference>
<dbReference type="HAMAP" id="MF_01632">
    <property type="entry name" value="UbiC"/>
    <property type="match status" value="1"/>
</dbReference>
<dbReference type="InterPro" id="IPR007440">
    <property type="entry name" value="Chorismate--pyruvate_lyase"/>
</dbReference>
<dbReference type="InterPro" id="IPR028978">
    <property type="entry name" value="Chorismate_lyase_/UTRA_dom_sf"/>
</dbReference>
<dbReference type="NCBIfam" id="NF008656">
    <property type="entry name" value="PRK11655.1"/>
    <property type="match status" value="1"/>
</dbReference>
<dbReference type="PANTHER" id="PTHR38683">
    <property type="entry name" value="CHORISMATE PYRUVATE-LYASE"/>
    <property type="match status" value="1"/>
</dbReference>
<dbReference type="PANTHER" id="PTHR38683:SF1">
    <property type="entry name" value="CHORISMATE PYRUVATE-LYASE"/>
    <property type="match status" value="1"/>
</dbReference>
<dbReference type="Pfam" id="PF04345">
    <property type="entry name" value="Chor_lyase"/>
    <property type="match status" value="1"/>
</dbReference>
<dbReference type="SUPFAM" id="SSF64288">
    <property type="entry name" value="Chorismate lyase-like"/>
    <property type="match status" value="1"/>
</dbReference>
<proteinExistence type="inferred from homology"/>
<organism>
    <name type="scientific">Yersinia enterocolitica serotype O:8 / biotype 1B (strain NCTC 13174 / 8081)</name>
    <dbReference type="NCBI Taxonomy" id="393305"/>
    <lineage>
        <taxon>Bacteria</taxon>
        <taxon>Pseudomonadati</taxon>
        <taxon>Pseudomonadota</taxon>
        <taxon>Gammaproteobacteria</taxon>
        <taxon>Enterobacterales</taxon>
        <taxon>Yersiniaceae</taxon>
        <taxon>Yersinia</taxon>
    </lineage>
</organism>
<name>UBIC_YERE8</name>